<proteinExistence type="evidence at transcript level"/>
<feature type="chain" id="PRO_0000249109" description="3-ketoacyl-CoA synthase 2">
    <location>
        <begin position="1"/>
        <end position="528"/>
    </location>
</feature>
<feature type="transmembrane region" description="Helical" evidence="2">
    <location>
        <begin position="36"/>
        <end position="56"/>
    </location>
</feature>
<feature type="transmembrane region" description="Helical" evidence="2">
    <location>
        <begin position="78"/>
        <end position="98"/>
    </location>
</feature>
<feature type="domain" description="FAE" evidence="2">
    <location>
        <begin position="97"/>
        <end position="388"/>
    </location>
</feature>
<feature type="active site" evidence="1">
    <location>
        <position position="241"/>
    </location>
</feature>
<feature type="active site" evidence="1">
    <location>
        <position position="320"/>
    </location>
</feature>
<feature type="active site" evidence="1">
    <location>
        <position position="407"/>
    </location>
</feature>
<feature type="active site" evidence="1">
    <location>
        <position position="411"/>
    </location>
</feature>
<feature type="active site" evidence="1">
    <location>
        <position position="444"/>
    </location>
</feature>
<feature type="sequence conflict" description="In Ref. 3; AAL67132." evidence="12" ref="3">
    <original>E</original>
    <variation>G</variation>
    <location>
        <position position="453"/>
    </location>
</feature>
<dbReference type="EC" id="2.3.1.199" evidence="12"/>
<dbReference type="EMBL" id="AC002411">
    <property type="protein sequence ID" value="AAC16740.1"/>
    <property type="molecule type" value="Genomic_DNA"/>
</dbReference>
<dbReference type="EMBL" id="CP002684">
    <property type="protein sequence ID" value="AEE27671.1"/>
    <property type="molecule type" value="Genomic_DNA"/>
</dbReference>
<dbReference type="EMBL" id="AY074518">
    <property type="protein sequence ID" value="AAL67132.1"/>
    <property type="molecule type" value="mRNA"/>
</dbReference>
<dbReference type="EMBL" id="BT015917">
    <property type="protein sequence ID" value="AAU95453.1"/>
    <property type="molecule type" value="mRNA"/>
</dbReference>
<dbReference type="EMBL" id="AK222101">
    <property type="protein sequence ID" value="BAD95022.1"/>
    <property type="status" value="ALT_INIT"/>
    <property type="molecule type" value="mRNA"/>
</dbReference>
<dbReference type="PIR" id="T00951">
    <property type="entry name" value="T00951"/>
</dbReference>
<dbReference type="RefSeq" id="NP_171918.1">
    <property type="nucleotide sequence ID" value="NM_100303.4"/>
</dbReference>
<dbReference type="SMR" id="Q5XEP9"/>
<dbReference type="BioGRID" id="24813">
    <property type="interactions" value="9"/>
</dbReference>
<dbReference type="FunCoup" id="Q5XEP9">
    <property type="interactions" value="225"/>
</dbReference>
<dbReference type="STRING" id="3702.Q5XEP9"/>
<dbReference type="ChEMBL" id="CHEMBL2242736"/>
<dbReference type="PaxDb" id="3702-AT1G04220.1"/>
<dbReference type="ProteomicsDB" id="247243"/>
<dbReference type="EnsemblPlants" id="AT1G04220.1">
    <property type="protein sequence ID" value="AT1G04220.1"/>
    <property type="gene ID" value="AT1G04220"/>
</dbReference>
<dbReference type="GeneID" id="839578"/>
<dbReference type="Gramene" id="AT1G04220.1">
    <property type="protein sequence ID" value="AT1G04220.1"/>
    <property type="gene ID" value="AT1G04220"/>
</dbReference>
<dbReference type="KEGG" id="ath:AT1G04220"/>
<dbReference type="Araport" id="AT1G04220"/>
<dbReference type="TAIR" id="AT1G04220">
    <property type="gene designation" value="KCS2"/>
</dbReference>
<dbReference type="eggNOG" id="ENOG502QPKZ">
    <property type="taxonomic scope" value="Eukaryota"/>
</dbReference>
<dbReference type="HOGENOM" id="CLU_013238_2_1_1"/>
<dbReference type="InParanoid" id="Q5XEP9"/>
<dbReference type="OMA" id="VMCPKEL"/>
<dbReference type="PhylomeDB" id="Q5XEP9"/>
<dbReference type="BioCyc" id="ARA:AT1G04220-MONOMER"/>
<dbReference type="UniPathway" id="UPA00094"/>
<dbReference type="PRO" id="PR:Q5XEP9"/>
<dbReference type="Proteomes" id="UP000006548">
    <property type="component" value="Chromosome 1"/>
</dbReference>
<dbReference type="ExpressionAtlas" id="Q5XEP9">
    <property type="expression patterns" value="baseline and differential"/>
</dbReference>
<dbReference type="GO" id="GO:0016020">
    <property type="term" value="C:membrane"/>
    <property type="evidence" value="ECO:0007669"/>
    <property type="project" value="UniProtKB-SubCell"/>
</dbReference>
<dbReference type="GO" id="GO:0009922">
    <property type="term" value="F:fatty acid elongase activity"/>
    <property type="evidence" value="ECO:0000314"/>
    <property type="project" value="TAIR"/>
</dbReference>
<dbReference type="GO" id="GO:0006633">
    <property type="term" value="P:fatty acid biosynthetic process"/>
    <property type="evidence" value="ECO:0007669"/>
    <property type="project" value="UniProtKB-UniPathway"/>
</dbReference>
<dbReference type="GO" id="GO:0006970">
    <property type="term" value="P:response to osmotic stress"/>
    <property type="evidence" value="ECO:0000270"/>
    <property type="project" value="TAIR"/>
</dbReference>
<dbReference type="GO" id="GO:0009611">
    <property type="term" value="P:response to wounding"/>
    <property type="evidence" value="ECO:0000270"/>
    <property type="project" value="TAIR"/>
</dbReference>
<dbReference type="GO" id="GO:0010345">
    <property type="term" value="P:suberin biosynthetic process"/>
    <property type="evidence" value="ECO:0000315"/>
    <property type="project" value="TAIR"/>
</dbReference>
<dbReference type="CDD" id="cd00831">
    <property type="entry name" value="CHS_like"/>
    <property type="match status" value="1"/>
</dbReference>
<dbReference type="FunFam" id="3.40.47.10:FF:000028">
    <property type="entry name" value="3-ketoacyl-CoA synthase"/>
    <property type="match status" value="1"/>
</dbReference>
<dbReference type="Gene3D" id="3.40.47.10">
    <property type="match status" value="1"/>
</dbReference>
<dbReference type="InterPro" id="IPR012392">
    <property type="entry name" value="3-ktacl-CoA_syn"/>
</dbReference>
<dbReference type="InterPro" id="IPR013747">
    <property type="entry name" value="ACP_syn_III_C"/>
</dbReference>
<dbReference type="InterPro" id="IPR013601">
    <property type="entry name" value="FAE1_typ3_polyketide_synth"/>
</dbReference>
<dbReference type="InterPro" id="IPR016039">
    <property type="entry name" value="Thiolase-like"/>
</dbReference>
<dbReference type="PANTHER" id="PTHR31561">
    <property type="entry name" value="3-KETOACYL-COA SYNTHASE"/>
    <property type="match status" value="1"/>
</dbReference>
<dbReference type="Pfam" id="PF08541">
    <property type="entry name" value="ACP_syn_III_C"/>
    <property type="match status" value="1"/>
</dbReference>
<dbReference type="Pfam" id="PF08392">
    <property type="entry name" value="FAE1_CUT1_RppA"/>
    <property type="match status" value="1"/>
</dbReference>
<dbReference type="PIRSF" id="PIRSF036417">
    <property type="entry name" value="3-ktacl-CoA_syn"/>
    <property type="match status" value="1"/>
</dbReference>
<dbReference type="SUPFAM" id="SSF53901">
    <property type="entry name" value="Thiolase-like"/>
    <property type="match status" value="2"/>
</dbReference>
<accession>Q5XEP9</accession>
<accession>O64485</accession>
<accession>Q56WE1</accession>
<accession>Q8VXW2</accession>
<name>KCS2_ARATH</name>
<sequence length="528" mass="59528">MNENHIQSDHMNNTIHVTNKKLPNFLLSVRLKYVKLGYHYLISNAVYILILPVGLLAATSSSFSLTDLTLLYNHLLKFHFLSSTLFAALLIFLTTLYFTTRPRRIFLLDFACYKPDSSLICTRETFMDRSQRVGIFTEDNLAFQQKILERSGLGQKTYFPEALLRVPPNPCMSEARKEAETVMFGAIDAVLEKTGVNPKDIGILVVNCSLFNPTPSLSAMIVNKYKLRGNVLSYNLGGMGCSAGLISIDLAKQLLQVQPNSYALVVSTENITLNWYLGNDRSMLLSNCIFRMGGAAVLLSNRSSDRCRSKYQLIHTVRTHKGSDDNAFNCVYQREDNDDNKQIGVSLSKNLMAIAGEALKTNITTLGPLVLPMSEQLLFFATLVARKVFNVKKIKPYIPDFKLAFEHFCIHAGGRAVLDEIEKNLDLSEWHMEPSRMTLNRFGNTSSSSLWYELAYSEAKGRIKRGDRTWQIAFGSGFKCNSAVWRALRTIDPSKEKKKKTNPWIDEIHEFPVPVPRTSPVTSSSESR</sequence>
<reference key="1">
    <citation type="journal article" date="2000" name="Nature">
        <title>Sequence and analysis of chromosome 1 of the plant Arabidopsis thaliana.</title>
        <authorList>
            <person name="Theologis A."/>
            <person name="Ecker J.R."/>
            <person name="Palm C.J."/>
            <person name="Federspiel N.A."/>
            <person name="Kaul S."/>
            <person name="White O."/>
            <person name="Alonso J."/>
            <person name="Altafi H."/>
            <person name="Araujo R."/>
            <person name="Bowman C.L."/>
            <person name="Brooks S.Y."/>
            <person name="Buehler E."/>
            <person name="Chan A."/>
            <person name="Chao Q."/>
            <person name="Chen H."/>
            <person name="Cheuk R.F."/>
            <person name="Chin C.W."/>
            <person name="Chung M.K."/>
            <person name="Conn L."/>
            <person name="Conway A.B."/>
            <person name="Conway A.R."/>
            <person name="Creasy T.H."/>
            <person name="Dewar K."/>
            <person name="Dunn P."/>
            <person name="Etgu P."/>
            <person name="Feldblyum T.V."/>
            <person name="Feng J.-D."/>
            <person name="Fong B."/>
            <person name="Fujii C.Y."/>
            <person name="Gill J.E."/>
            <person name="Goldsmith A.D."/>
            <person name="Haas B."/>
            <person name="Hansen N.F."/>
            <person name="Hughes B."/>
            <person name="Huizar L."/>
            <person name="Hunter J.L."/>
            <person name="Jenkins J."/>
            <person name="Johnson-Hopson C."/>
            <person name="Khan S."/>
            <person name="Khaykin E."/>
            <person name="Kim C.J."/>
            <person name="Koo H.L."/>
            <person name="Kremenetskaia I."/>
            <person name="Kurtz D.B."/>
            <person name="Kwan A."/>
            <person name="Lam B."/>
            <person name="Langin-Hooper S."/>
            <person name="Lee A."/>
            <person name="Lee J.M."/>
            <person name="Lenz C.A."/>
            <person name="Li J.H."/>
            <person name="Li Y.-P."/>
            <person name="Lin X."/>
            <person name="Liu S.X."/>
            <person name="Liu Z.A."/>
            <person name="Luros J.S."/>
            <person name="Maiti R."/>
            <person name="Marziali A."/>
            <person name="Militscher J."/>
            <person name="Miranda M."/>
            <person name="Nguyen M."/>
            <person name="Nierman W.C."/>
            <person name="Osborne B.I."/>
            <person name="Pai G."/>
            <person name="Peterson J."/>
            <person name="Pham P.K."/>
            <person name="Rizzo M."/>
            <person name="Rooney T."/>
            <person name="Rowley D."/>
            <person name="Sakano H."/>
            <person name="Salzberg S.L."/>
            <person name="Schwartz J.R."/>
            <person name="Shinn P."/>
            <person name="Southwick A.M."/>
            <person name="Sun H."/>
            <person name="Tallon L.J."/>
            <person name="Tambunga G."/>
            <person name="Toriumi M.J."/>
            <person name="Town C.D."/>
            <person name="Utterback T."/>
            <person name="Van Aken S."/>
            <person name="Vaysberg M."/>
            <person name="Vysotskaia V.S."/>
            <person name="Walker M."/>
            <person name="Wu D."/>
            <person name="Yu G."/>
            <person name="Fraser C.M."/>
            <person name="Venter J.C."/>
            <person name="Davis R.W."/>
        </authorList>
    </citation>
    <scope>NUCLEOTIDE SEQUENCE [LARGE SCALE GENOMIC DNA]</scope>
    <source>
        <strain>cv. Columbia</strain>
    </source>
</reference>
<reference key="2">
    <citation type="journal article" date="2017" name="Plant J.">
        <title>Araport11: a complete reannotation of the Arabidopsis thaliana reference genome.</title>
        <authorList>
            <person name="Cheng C.Y."/>
            <person name="Krishnakumar V."/>
            <person name="Chan A.P."/>
            <person name="Thibaud-Nissen F."/>
            <person name="Schobel S."/>
            <person name="Town C.D."/>
        </authorList>
    </citation>
    <scope>GENOME REANNOTATION</scope>
    <source>
        <strain>cv. Columbia</strain>
    </source>
</reference>
<reference key="3">
    <citation type="journal article" date="2003" name="Science">
        <title>Empirical analysis of transcriptional activity in the Arabidopsis genome.</title>
        <authorList>
            <person name="Yamada K."/>
            <person name="Lim J."/>
            <person name="Dale J.M."/>
            <person name="Chen H."/>
            <person name="Shinn P."/>
            <person name="Palm C.J."/>
            <person name="Southwick A.M."/>
            <person name="Wu H.C."/>
            <person name="Kim C.J."/>
            <person name="Nguyen M."/>
            <person name="Pham P.K."/>
            <person name="Cheuk R.F."/>
            <person name="Karlin-Newmann G."/>
            <person name="Liu S.X."/>
            <person name="Lam B."/>
            <person name="Sakano H."/>
            <person name="Wu T."/>
            <person name="Yu G."/>
            <person name="Miranda M."/>
            <person name="Quach H.L."/>
            <person name="Tripp M."/>
            <person name="Chang C.H."/>
            <person name="Lee J.M."/>
            <person name="Toriumi M.J."/>
            <person name="Chan M.M."/>
            <person name="Tang C.C."/>
            <person name="Onodera C.S."/>
            <person name="Deng J.M."/>
            <person name="Akiyama K."/>
            <person name="Ansari Y."/>
            <person name="Arakawa T."/>
            <person name="Banh J."/>
            <person name="Banno F."/>
            <person name="Bowser L."/>
            <person name="Brooks S.Y."/>
            <person name="Carninci P."/>
            <person name="Chao Q."/>
            <person name="Choy N."/>
            <person name="Enju A."/>
            <person name="Goldsmith A.D."/>
            <person name="Gurjal M."/>
            <person name="Hansen N.F."/>
            <person name="Hayashizaki Y."/>
            <person name="Johnson-Hopson C."/>
            <person name="Hsuan V.W."/>
            <person name="Iida K."/>
            <person name="Karnes M."/>
            <person name="Khan S."/>
            <person name="Koesema E."/>
            <person name="Ishida J."/>
            <person name="Jiang P.X."/>
            <person name="Jones T."/>
            <person name="Kawai J."/>
            <person name="Kamiya A."/>
            <person name="Meyers C."/>
            <person name="Nakajima M."/>
            <person name="Narusaka M."/>
            <person name="Seki M."/>
            <person name="Sakurai T."/>
            <person name="Satou M."/>
            <person name="Tamse R."/>
            <person name="Vaysberg M."/>
            <person name="Wallender E.K."/>
            <person name="Wong C."/>
            <person name="Yamamura Y."/>
            <person name="Yuan S."/>
            <person name="Shinozaki K."/>
            <person name="Davis R.W."/>
            <person name="Theologis A."/>
            <person name="Ecker J.R."/>
        </authorList>
    </citation>
    <scope>NUCLEOTIDE SEQUENCE [LARGE SCALE MRNA] OF 6-528</scope>
    <source>
        <strain>cv. Columbia</strain>
    </source>
</reference>
<reference key="4">
    <citation type="submission" date="2004-10" db="EMBL/GenBank/DDBJ databases">
        <title>Arabidopsis ORF clones.</title>
        <authorList>
            <person name="Cheuk R.F."/>
            <person name="Chen H."/>
            <person name="Kim C.J."/>
            <person name="Shinn P."/>
            <person name="Ecker J.R."/>
        </authorList>
    </citation>
    <scope>NUCLEOTIDE SEQUENCE [LARGE SCALE MRNA] OF 11-528</scope>
    <source>
        <strain>cv. Columbia</strain>
    </source>
</reference>
<reference key="5">
    <citation type="submission" date="2005-03" db="EMBL/GenBank/DDBJ databases">
        <title>Large-scale analysis of RIKEN Arabidopsis full-length (RAFL) cDNAs.</title>
        <authorList>
            <person name="Totoki Y."/>
            <person name="Seki M."/>
            <person name="Ishida J."/>
            <person name="Nakajima M."/>
            <person name="Enju A."/>
            <person name="Kamiya A."/>
            <person name="Narusaka M."/>
            <person name="Shin-i T."/>
            <person name="Nakagawa M."/>
            <person name="Sakamoto N."/>
            <person name="Oishi K."/>
            <person name="Kohara Y."/>
            <person name="Kobayashi M."/>
            <person name="Toyoda A."/>
            <person name="Sakaki Y."/>
            <person name="Sakurai T."/>
            <person name="Iida K."/>
            <person name="Akiyama K."/>
            <person name="Satou M."/>
            <person name="Toyoda T."/>
            <person name="Konagaya A."/>
            <person name="Carninci P."/>
            <person name="Kawai J."/>
            <person name="Hayashizaki Y."/>
            <person name="Shinozaki K."/>
        </authorList>
    </citation>
    <scope>NUCLEOTIDE SEQUENCE [LARGE SCALE MRNA] OF 332-528</scope>
    <source>
        <strain>cv. Columbia</strain>
    </source>
</reference>
<reference key="6">
    <citation type="journal article" date="2003" name="Pest Manag. Sci.">
        <title>Flufenacet herbicide treatment phenocopies the fiddlehead mutant in Arabidopsis thaliana.</title>
        <authorList>
            <person name="Lechelt-Kunze C."/>
            <person name="Meissner R.C."/>
            <person name="Drewes M."/>
            <person name="Tietjen K."/>
        </authorList>
    </citation>
    <scope>INDUCTION</scope>
    <scope>GENE FAMILY</scope>
</reference>
<reference key="7">
    <citation type="journal article" date="2004" name="Proc. Natl. Acad. Sci. U.S.A.">
        <title>Specific and differential inhibition of very-long-chain fatty acid elongases from Arabidopsis thaliana by different herbicides.</title>
        <authorList>
            <person name="Trenkamp S."/>
            <person name="Martin W."/>
            <person name="Tietjen K."/>
        </authorList>
    </citation>
    <scope>FUNCTION</scope>
    <scope>SUBCELLULAR LOCATION</scope>
    <scope>ACTIVITY REGULATION</scope>
</reference>
<reference key="8">
    <citation type="journal article" date="2008" name="Plant Mol. Biol.">
        <title>The VLCFA elongase gene family in Arabidopsis thaliana: phylogenetic analysis, 3D modelling and expression profiling.</title>
        <authorList>
            <person name="Joubes J."/>
            <person name="Raffaele S."/>
            <person name="Bourdenx B."/>
            <person name="Garcia C."/>
            <person name="Laroche-Traineau J."/>
            <person name="Moreau P."/>
            <person name="Domergue F."/>
            <person name="Lessire R."/>
        </authorList>
    </citation>
    <scope>GENE FAMILY</scope>
    <scope>NOMENCLATURE</scope>
    <scope>3D-STRUCTURE MODELING</scope>
    <scope>TISSUE SPECIFICITY</scope>
</reference>
<reference key="9">
    <citation type="journal article" date="2009" name="Plant J.">
        <title>The DAISY gene from Arabidopsis encodes a fatty acid elongase condensing enzyme involved in the biosynthesis of aliphatic suberin in roots and the chalaza-micropyle region of seeds.</title>
        <authorList>
            <person name="Franke R."/>
            <person name="Hoefer R."/>
            <person name="Briesen I."/>
            <person name="Emsermann M."/>
            <person name="Efremova N."/>
            <person name="Yephremov A."/>
            <person name="Schreiber L."/>
        </authorList>
    </citation>
    <scope>FUNCTION</scope>
    <scope>DISRUPTION PHENOTYPE</scope>
    <scope>TISSUE SPECIFICITY</scope>
    <scope>INDUCTION BY WOUNDING; DROUGHT AND SALT</scope>
</reference>
<reference key="10">
    <citation type="journal article" date="2009" name="Plant J.">
        <title>Two Arabidopsis 3-ketoacyl CoA synthase genes, KCS20 and KCS2/DAISY, are functionally redundant in cuticular wax and root suberin biosynthesis, but differentially controlled by osmotic stress.</title>
        <authorList>
            <person name="Lee S.B."/>
            <person name="Jung S.J."/>
            <person name="Go Y.S."/>
            <person name="Kim H.U."/>
            <person name="Kim J.K."/>
            <person name="Cho H.J."/>
            <person name="Park O.K."/>
            <person name="Suh M.C."/>
        </authorList>
    </citation>
    <scope>FUNCTION</scope>
    <scope>TISSUE SPECIFICITY</scope>
    <scope>INDUCTION</scope>
    <scope>DISRUPTION PHENOTYPE</scope>
</reference>
<reference key="11">
    <citation type="journal article" date="2012" name="Phytochemistry">
        <title>Inhibition of saturated very-long-chain fatty acid biosynthesis by mefluidide and perfluidone, selective inhibitors of 3-ketoacyl-CoA synthases.</title>
        <authorList>
            <person name="Tresch S."/>
            <person name="Heilmann M."/>
            <person name="Christiansen N."/>
            <person name="Looser R."/>
            <person name="Grossmann K."/>
        </authorList>
    </citation>
    <scope>ACTIVITY REGULATION</scope>
</reference>
<reference key="12">
    <citation type="journal article" date="2015" name="Plant Cell Physiol.">
        <title>Cuticular wax biosynthesis is up-regulated by the MYB94 transcription factor in Arabidopsis.</title>
        <authorList>
            <person name="Lee S.B."/>
            <person name="Suh M.C."/>
        </authorList>
    </citation>
    <scope>INDUCTION BY MYB94</scope>
</reference>
<protein>
    <recommendedName>
        <fullName evidence="10">3-ketoacyl-CoA synthase 2</fullName>
        <shortName evidence="10">KCS-2</shortName>
        <ecNumber evidence="12">2.3.1.199</ecNumber>
    </recommendedName>
    <alternativeName>
        <fullName evidence="11">Docosanoic acid synthase</fullName>
    </alternativeName>
    <alternativeName>
        <fullName evidence="10">Very long-chain fatty acid condensing enzyme 2</fullName>
        <shortName evidence="10">VLCFA condensing enzyme 2</shortName>
    </alternativeName>
</protein>
<organism>
    <name type="scientific">Arabidopsis thaliana</name>
    <name type="common">Mouse-ear cress</name>
    <dbReference type="NCBI Taxonomy" id="3702"/>
    <lineage>
        <taxon>Eukaryota</taxon>
        <taxon>Viridiplantae</taxon>
        <taxon>Streptophyta</taxon>
        <taxon>Embryophyta</taxon>
        <taxon>Tracheophyta</taxon>
        <taxon>Spermatophyta</taxon>
        <taxon>Magnoliopsida</taxon>
        <taxon>eudicotyledons</taxon>
        <taxon>Gunneridae</taxon>
        <taxon>Pentapetalae</taxon>
        <taxon>rosids</taxon>
        <taxon>malvids</taxon>
        <taxon>Brassicales</taxon>
        <taxon>Brassicaceae</taxon>
        <taxon>Camelineae</taxon>
        <taxon>Arabidopsis</taxon>
    </lineage>
</organism>
<evidence type="ECO:0000250" key="1">
    <source>
        <dbReference type="UniProtKB" id="Q38860"/>
    </source>
</evidence>
<evidence type="ECO:0000255" key="2"/>
<evidence type="ECO:0000269" key="3">
    <source>
    </source>
</evidence>
<evidence type="ECO:0000269" key="4">
    <source>
    </source>
</evidence>
<evidence type="ECO:0000269" key="5">
    <source>
    </source>
</evidence>
<evidence type="ECO:0000269" key="6">
    <source>
    </source>
</evidence>
<evidence type="ECO:0000269" key="7">
    <source>
    </source>
</evidence>
<evidence type="ECO:0000269" key="8">
    <source>
    </source>
</evidence>
<evidence type="ECO:0000269" key="9">
    <source>
    </source>
</evidence>
<evidence type="ECO:0000303" key="10">
    <source>
    </source>
</evidence>
<evidence type="ECO:0000303" key="11">
    <source>
    </source>
</evidence>
<evidence type="ECO:0000305" key="12"/>
<evidence type="ECO:0000305" key="13">
    <source>
    </source>
</evidence>
<evidence type="ECO:0000312" key="14">
    <source>
        <dbReference type="Araport" id="AT1G04220"/>
    </source>
</evidence>
<evidence type="ECO:0000312" key="15">
    <source>
        <dbReference type="EMBL" id="AAC16740.1"/>
    </source>
</evidence>
<comment type="function">
    <text evidence="4 6 7">Mediates the synthesis of VLCFAs from 22 to 26 carbons in length (e.g. C22, C24, C26) (PubMed:15277688). Involved in the elongation of C20 fatty acid suberin precursors (PubMed:18786002). Functionally redundant with KCS20 in the two-carbon elongation of C22 fatty acids that is required for cuticular wax and root suberin biosynthesis (PubMed:19619160).</text>
</comment>
<comment type="catalytic activity">
    <reaction evidence="12">
        <text>a very-long-chain acyl-CoA + malonyl-CoA + H(+) = a very-long-chain 3-oxoacyl-CoA + CO2 + CoA</text>
        <dbReference type="Rhea" id="RHEA:32727"/>
        <dbReference type="ChEBI" id="CHEBI:15378"/>
        <dbReference type="ChEBI" id="CHEBI:16526"/>
        <dbReference type="ChEBI" id="CHEBI:57287"/>
        <dbReference type="ChEBI" id="CHEBI:57384"/>
        <dbReference type="ChEBI" id="CHEBI:90725"/>
        <dbReference type="ChEBI" id="CHEBI:90736"/>
        <dbReference type="EC" id="2.3.1.199"/>
    </reaction>
</comment>
<comment type="activity regulation">
    <text evidence="4 8">Inhibited by K3 herbicides such as allidochlor, anilofos, cafenstrole and flufenacet (PubMed:15277688). Strongly inhibited by metazachlor (PubMed:22284369).</text>
</comment>
<comment type="pathway">
    <text>Lipid metabolism; fatty acid biosynthesis.</text>
</comment>
<comment type="subcellular location">
    <subcellularLocation>
        <location evidence="4">Membrane</location>
        <topology evidence="4">Multi-pass membrane protein</topology>
    </subcellularLocation>
</comment>
<comment type="tissue specificity">
    <text evidence="5 6 7">Expressed in siliques, flowers and stems (PubMed:18465198). In young seedlings, expressed in the central cylinder of primary roots, in emerging lateral roots and in their root cap, but not in aboveground tissues such as hypocotyls, cotyledons and leaves. Expressed in sepals in mature flowers and in the chalaza and micropyle region of developing seeds shortly prior to or just after the detachment from the funiculus (PubMed:18786002). Expressed in roots, flowers, cauline leaves and siliques (PubMed:19619160).</text>
</comment>
<comment type="induction">
    <text evidence="3 6 7 9">Repressed by herbicides such as flufenacet and benfuresate (PubMed:12916765). Up-regulated by wounding, drought and salt (PubMed:18786002). Strongly up-regulated by abscisic acid and drought, and to a lower level, by salt and osmotic stress (PubMed:19619160). Up-regulated by the MYB94 transcription factor (PubMed:25305760).</text>
</comment>
<comment type="disruption phenotype">
    <text evidence="6 7">No visible phenotype in flowers or siliques, but reduced root growth. Suberin with a significant decrease in VLCFA derivatives longer than C20 (PubMed:18786002). No visible phenotype, but reduced root growth. Kcs2 and kcs20 double mutants have a glossy green appearance due to a significant reduction of the amount of epicuticular wax crystals on the stems and siliques, a significant reduction of C22 and C24 VLCFA derivatives in aliphatic suberin and a roots growth retardation and abnormal lamellation of the suberin layer in the endodermis (PubMed:19619160).</text>
</comment>
<comment type="similarity">
    <text evidence="12">Belongs to the thiolase-like superfamily. Chalcone/stilbene synthases family.</text>
</comment>
<comment type="caution">
    <text evidence="12">It is uncertain whether Met-1 or Met-11 is the initiator.</text>
</comment>
<comment type="sequence caution" evidence="12">
    <conflict type="erroneous initiation">
        <sequence resource="EMBL-CDS" id="BAD95022"/>
    </conflict>
    <text>Truncated N-terminus.</text>
</comment>
<keyword id="KW-0012">Acyltransferase</keyword>
<keyword id="KW-0472">Membrane</keyword>
<keyword id="KW-1185">Reference proteome</keyword>
<keyword id="KW-0808">Transferase</keyword>
<keyword id="KW-0812">Transmembrane</keyword>
<keyword id="KW-1133">Transmembrane helix</keyword>
<gene>
    <name evidence="10" type="primary">KCS2</name>
    <name evidence="11" type="synonym">DAISY</name>
    <name evidence="13" type="synonym">KCS17</name>
    <name evidence="14" type="ordered locus">At1g04220</name>
    <name evidence="15" type="ORF">F20D22.1</name>
</gene>